<reference key="1">
    <citation type="journal article" date="2005" name="Mol. Genet. Genomics">
        <title>A fine physical map of the rice chromosome 5.</title>
        <authorList>
            <person name="Cheng C.-H."/>
            <person name="Chung M.C."/>
            <person name="Liu S.-M."/>
            <person name="Chen S.-K."/>
            <person name="Kao F.Y."/>
            <person name="Lin S.-J."/>
            <person name="Hsiao S.-H."/>
            <person name="Tseng I.C."/>
            <person name="Hsing Y.-I.C."/>
            <person name="Wu H.-P."/>
            <person name="Chen C.-S."/>
            <person name="Shaw J.-F."/>
            <person name="Wu J."/>
            <person name="Matsumoto T."/>
            <person name="Sasaki T."/>
            <person name="Chen H.-C."/>
            <person name="Chow T.-Y."/>
        </authorList>
    </citation>
    <scope>NUCLEOTIDE SEQUENCE [LARGE SCALE GENOMIC DNA]</scope>
    <source>
        <strain>cv. Nipponbare</strain>
    </source>
</reference>
<reference key="2">
    <citation type="journal article" date="2005" name="Nature">
        <title>The map-based sequence of the rice genome.</title>
        <authorList>
            <consortium name="International rice genome sequencing project (IRGSP)"/>
        </authorList>
    </citation>
    <scope>NUCLEOTIDE SEQUENCE [LARGE SCALE GENOMIC DNA]</scope>
    <source>
        <strain>cv. Nipponbare</strain>
    </source>
</reference>
<reference key="3">
    <citation type="journal article" date="2008" name="Nucleic Acids Res.">
        <title>The rice annotation project database (RAP-DB): 2008 update.</title>
        <authorList>
            <consortium name="The rice annotation project (RAP)"/>
        </authorList>
    </citation>
    <scope>GENOME REANNOTATION</scope>
    <source>
        <strain>cv. Nipponbare</strain>
    </source>
</reference>
<reference key="4">
    <citation type="journal article" date="2013" name="Rice">
        <title>Improvement of the Oryza sativa Nipponbare reference genome using next generation sequence and optical map data.</title>
        <authorList>
            <person name="Kawahara Y."/>
            <person name="de la Bastide M."/>
            <person name="Hamilton J.P."/>
            <person name="Kanamori H."/>
            <person name="McCombie W.R."/>
            <person name="Ouyang S."/>
            <person name="Schwartz D.C."/>
            <person name="Tanaka T."/>
            <person name="Wu J."/>
            <person name="Zhou S."/>
            <person name="Childs K.L."/>
            <person name="Davidson R.M."/>
            <person name="Lin H."/>
            <person name="Quesada-Ocampo L."/>
            <person name="Vaillancourt B."/>
            <person name="Sakai H."/>
            <person name="Lee S.S."/>
            <person name="Kim J."/>
            <person name="Numa H."/>
            <person name="Itoh T."/>
            <person name="Buell C.R."/>
            <person name="Matsumoto T."/>
        </authorList>
    </citation>
    <scope>GENOME REANNOTATION</scope>
    <source>
        <strain>cv. Nipponbare</strain>
    </source>
</reference>
<reference key="5">
    <citation type="journal article" date="2005" name="PLoS Biol.">
        <title>The genomes of Oryza sativa: a history of duplications.</title>
        <authorList>
            <person name="Yu J."/>
            <person name="Wang J."/>
            <person name="Lin W."/>
            <person name="Li S."/>
            <person name="Li H."/>
            <person name="Zhou J."/>
            <person name="Ni P."/>
            <person name="Dong W."/>
            <person name="Hu S."/>
            <person name="Zeng C."/>
            <person name="Zhang J."/>
            <person name="Zhang Y."/>
            <person name="Li R."/>
            <person name="Xu Z."/>
            <person name="Li S."/>
            <person name="Li X."/>
            <person name="Zheng H."/>
            <person name="Cong L."/>
            <person name="Lin L."/>
            <person name="Yin J."/>
            <person name="Geng J."/>
            <person name="Li G."/>
            <person name="Shi J."/>
            <person name="Liu J."/>
            <person name="Lv H."/>
            <person name="Li J."/>
            <person name="Wang J."/>
            <person name="Deng Y."/>
            <person name="Ran L."/>
            <person name="Shi X."/>
            <person name="Wang X."/>
            <person name="Wu Q."/>
            <person name="Li C."/>
            <person name="Ren X."/>
            <person name="Wang J."/>
            <person name="Wang X."/>
            <person name="Li D."/>
            <person name="Liu D."/>
            <person name="Zhang X."/>
            <person name="Ji Z."/>
            <person name="Zhao W."/>
            <person name="Sun Y."/>
            <person name="Zhang Z."/>
            <person name="Bao J."/>
            <person name="Han Y."/>
            <person name="Dong L."/>
            <person name="Ji J."/>
            <person name="Chen P."/>
            <person name="Wu S."/>
            <person name="Liu J."/>
            <person name="Xiao Y."/>
            <person name="Bu D."/>
            <person name="Tan J."/>
            <person name="Yang L."/>
            <person name="Ye C."/>
            <person name="Zhang J."/>
            <person name="Xu J."/>
            <person name="Zhou Y."/>
            <person name="Yu Y."/>
            <person name="Zhang B."/>
            <person name="Zhuang S."/>
            <person name="Wei H."/>
            <person name="Liu B."/>
            <person name="Lei M."/>
            <person name="Yu H."/>
            <person name="Li Y."/>
            <person name="Xu H."/>
            <person name="Wei S."/>
            <person name="He X."/>
            <person name="Fang L."/>
            <person name="Zhang Z."/>
            <person name="Zhang Y."/>
            <person name="Huang X."/>
            <person name="Su Z."/>
            <person name="Tong W."/>
            <person name="Li J."/>
            <person name="Tong Z."/>
            <person name="Li S."/>
            <person name="Ye J."/>
            <person name="Wang L."/>
            <person name="Fang L."/>
            <person name="Lei T."/>
            <person name="Chen C.-S."/>
            <person name="Chen H.-C."/>
            <person name="Xu Z."/>
            <person name="Li H."/>
            <person name="Huang H."/>
            <person name="Zhang F."/>
            <person name="Xu H."/>
            <person name="Li N."/>
            <person name="Zhao C."/>
            <person name="Li S."/>
            <person name="Dong L."/>
            <person name="Huang Y."/>
            <person name="Li L."/>
            <person name="Xi Y."/>
            <person name="Qi Q."/>
            <person name="Li W."/>
            <person name="Zhang B."/>
            <person name="Hu W."/>
            <person name="Zhang Y."/>
            <person name="Tian X."/>
            <person name="Jiao Y."/>
            <person name="Liang X."/>
            <person name="Jin J."/>
            <person name="Gao L."/>
            <person name="Zheng W."/>
            <person name="Hao B."/>
            <person name="Liu S.-M."/>
            <person name="Wang W."/>
            <person name="Yuan L."/>
            <person name="Cao M."/>
            <person name="McDermott J."/>
            <person name="Samudrala R."/>
            <person name="Wang J."/>
            <person name="Wong G.K.-S."/>
            <person name="Yang H."/>
        </authorList>
    </citation>
    <scope>NUCLEOTIDE SEQUENCE [LARGE SCALE GENOMIC DNA]</scope>
    <source>
        <strain>cv. Nipponbare</strain>
    </source>
</reference>
<reference key="6">
    <citation type="journal article" date="2003" name="Science">
        <title>Collection, mapping, and annotation of over 28,000 cDNA clones from japonica rice.</title>
        <authorList>
            <consortium name="The rice full-length cDNA consortium"/>
        </authorList>
    </citation>
    <scope>NUCLEOTIDE SEQUENCE [LARGE SCALE MRNA] (ISOFORMS 1 AND 2)</scope>
    <source>
        <strain>cv. Nipponbare</strain>
    </source>
</reference>
<reference key="7">
    <citation type="journal article" date="2015" name="Gene">
        <title>A rice DEAD-box RNA helicase protein, OsRH17, suppresses 16S ribosomal RNA maturation in Escherichia coli.</title>
        <authorList>
            <person name="Xu J."/>
            <person name="Liu C."/>
            <person name="Li M."/>
            <person name="Hu J."/>
            <person name="Zhu L."/>
            <person name="Zeng D."/>
            <person name="Yang Y."/>
            <person name="Peng Y."/>
            <person name="Ruan B."/>
            <person name="Guo L."/>
            <person name="Li H."/>
        </authorList>
    </citation>
    <scope>FUNCTION</scope>
    <scope>SUBCELLULAR LOCATION</scope>
    <scope>TISSUE SPECIFICITY</scope>
    <scope>INDUCTION</scope>
</reference>
<protein>
    <recommendedName>
        <fullName evidence="7">DEAD-box ATP-dependent RNA helicase 17</fullName>
        <shortName evidence="6">OsRH17</shortName>
        <ecNumber evidence="7">3.6.4.13</ecNumber>
    </recommendedName>
</protein>
<sequence length="591" mass="66904">MAKKLGKSPVAKEEDKEGLFASCSFTDLGLHPTLCAHLQDKMGFQAPTRIQAQAIPVAMSGQHMLVKAATGTGKTLAYLAPIVHLLQMREPRVERTDGTFALVLVPTRELCLQVYGIAQQLVHRFHWLVPGYIMGGENRAKEKARLRKGISILIATPGRLLDHLQHTSSFVYPNMRWIVFDEADSILELGFGKALEDILEHLGSRNDTSNQNKNKMEPMKRQNLLLSATLNEKVNRLAKISLKNPVMIGLDEQNSSAHGKNHTSLLSDDEEEILEKHNVTVEQAVDDFKLPAQLVQRYVKVSCGSRLAILLTILKSLFERQLSHKVVVFLSTCDSVDFHHTVLSQLEWSPGLQLDTDKKQKFISCKVFRLHGNMDQDDRKKSFLGFSSEKSAILVSTDVAARGLDFPKVKCIIQYDSPGEASEYVHRVGRTARIGEKGEALLFLQPIETDYLRDLELHGASLTEYPLQKVLDSFPVNGQRLHKRKQISLDMHPWIMSLQRALESFVTSEDTTKKLARDAFCSWVRAYTAHRGELKKIFMVKKLHLGHVARSFGLKEQPSLLGRSHQVQLKKRKKEQKRERPAKRRKIPAKR</sequence>
<comment type="function">
    <text evidence="8">May play a role in organellar ribosome biogenesis and suppress 16S rRNA maturation.</text>
</comment>
<comment type="catalytic activity">
    <reaction evidence="7">
        <text>ATP + H2O = ADP + phosphate + H(+)</text>
        <dbReference type="Rhea" id="RHEA:13065"/>
        <dbReference type="ChEBI" id="CHEBI:15377"/>
        <dbReference type="ChEBI" id="CHEBI:15378"/>
        <dbReference type="ChEBI" id="CHEBI:30616"/>
        <dbReference type="ChEBI" id="CHEBI:43474"/>
        <dbReference type="ChEBI" id="CHEBI:456216"/>
        <dbReference type="EC" id="3.6.4.13"/>
    </reaction>
</comment>
<comment type="subcellular location">
    <subcellularLocation>
        <location evidence="4">Nucleus</location>
    </subcellularLocation>
</comment>
<comment type="alternative products">
    <event type="alternative splicing"/>
    <isoform>
        <id>Q0DLB9-1</id>
        <name>1</name>
        <sequence type="displayed"/>
    </isoform>
    <isoform>
        <id>Q0DLB9-2</id>
        <name>2</name>
        <sequence type="described" ref="VSP_024167 VSP_024168"/>
    </isoform>
</comment>
<comment type="tissue specificity">
    <text evidence="4">Expressed in flowers and pollen grains.</text>
</comment>
<comment type="induction">
    <text evidence="4">Induced by auxin (NAA), abscisic acid (ABA) and jasmonate (JA).</text>
</comment>
<comment type="domain">
    <text evidence="7">The Q motif is unique to and characteristic of the DEAD box family of RNA helicases and controls ATP binding and hydrolysis.</text>
</comment>
<comment type="similarity">
    <text evidence="7">Belongs to the DEAD box helicase family. DDX31/DBP7 subfamily.</text>
</comment>
<comment type="sequence caution" evidence="7">
    <conflict type="erroneous gene model prediction">
        <sequence resource="EMBL-CDS" id="AAK73153"/>
    </conflict>
</comment>
<comment type="sequence caution" evidence="7">
    <conflict type="erroneous termination">
        <sequence resource="EMBL" id="AK066175"/>
    </conflict>
    <text>Truncated C-terminus.</text>
</comment>
<gene>
    <name evidence="6" type="primary">RH17</name>
    <name evidence="10" type="ordered locus">Os05g0110500</name>
    <name evidence="7" type="ordered locus">LOC_Os05g01990</name>
    <name evidence="11" type="ORF">OsJ_16855</name>
    <name evidence="9" type="ORF">P0016H04.6</name>
</gene>
<name>RH17_ORYSJ</name>
<accession>Q0DLB9</accession>
<accession>B9FM36</accession>
<accession>Q65XW2</accession>
<accession>Q94HJ1</accession>
<evidence type="ECO:0000255" key="1">
    <source>
        <dbReference type="PROSITE-ProRule" id="PRU00541"/>
    </source>
</evidence>
<evidence type="ECO:0000255" key="2">
    <source>
        <dbReference type="PROSITE-ProRule" id="PRU00542"/>
    </source>
</evidence>
<evidence type="ECO:0000256" key="3">
    <source>
        <dbReference type="SAM" id="MobiDB-lite"/>
    </source>
</evidence>
<evidence type="ECO:0000269" key="4">
    <source>
    </source>
</evidence>
<evidence type="ECO:0000303" key="5">
    <source>
    </source>
</evidence>
<evidence type="ECO:0000303" key="6">
    <source>
    </source>
</evidence>
<evidence type="ECO:0000305" key="7"/>
<evidence type="ECO:0000305" key="8">
    <source>
    </source>
</evidence>
<evidence type="ECO:0000312" key="9">
    <source>
        <dbReference type="EMBL" id="AAU44200.1"/>
    </source>
</evidence>
<evidence type="ECO:0000312" key="10">
    <source>
        <dbReference type="EMBL" id="BAS91915.1"/>
    </source>
</evidence>
<evidence type="ECO:0000312" key="11">
    <source>
        <dbReference type="EMBL" id="EEE62071.1"/>
    </source>
</evidence>
<keyword id="KW-0025">Alternative splicing</keyword>
<keyword id="KW-0067">ATP-binding</keyword>
<keyword id="KW-0347">Helicase</keyword>
<keyword id="KW-0378">Hydrolase</keyword>
<keyword id="KW-0547">Nucleotide-binding</keyword>
<keyword id="KW-0539">Nucleus</keyword>
<keyword id="KW-1185">Reference proteome</keyword>
<keyword id="KW-0690">Ribosome biogenesis</keyword>
<keyword id="KW-0694">RNA-binding</keyword>
<organism>
    <name type="scientific">Oryza sativa subsp. japonica</name>
    <name type="common">Rice</name>
    <dbReference type="NCBI Taxonomy" id="39947"/>
    <lineage>
        <taxon>Eukaryota</taxon>
        <taxon>Viridiplantae</taxon>
        <taxon>Streptophyta</taxon>
        <taxon>Embryophyta</taxon>
        <taxon>Tracheophyta</taxon>
        <taxon>Spermatophyta</taxon>
        <taxon>Magnoliopsida</taxon>
        <taxon>Liliopsida</taxon>
        <taxon>Poales</taxon>
        <taxon>Poaceae</taxon>
        <taxon>BOP clade</taxon>
        <taxon>Oryzoideae</taxon>
        <taxon>Oryzeae</taxon>
        <taxon>Oryzinae</taxon>
        <taxon>Oryza</taxon>
        <taxon>Oryza sativa</taxon>
    </lineage>
</organism>
<feature type="chain" id="PRO_0000282495" description="DEAD-box ATP-dependent RNA helicase 17">
    <location>
        <begin position="1"/>
        <end position="591"/>
    </location>
</feature>
<feature type="domain" description="Helicase ATP-binding" evidence="1">
    <location>
        <begin position="55"/>
        <end position="248"/>
    </location>
</feature>
<feature type="domain" description="Helicase C-terminal" evidence="2">
    <location>
        <begin position="293"/>
        <end position="482"/>
    </location>
</feature>
<feature type="region of interest" description="Disordered" evidence="3">
    <location>
        <begin position="562"/>
        <end position="591"/>
    </location>
</feature>
<feature type="short sequence motif" description="Q motif">
    <location>
        <begin position="23"/>
        <end position="52"/>
    </location>
</feature>
<feature type="short sequence motif" description="DEAD box">
    <location>
        <begin position="181"/>
        <end position="184"/>
    </location>
</feature>
<feature type="compositionally biased region" description="Basic residues" evidence="3">
    <location>
        <begin position="568"/>
        <end position="591"/>
    </location>
</feature>
<feature type="binding site" evidence="1">
    <location>
        <begin position="68"/>
        <end position="75"/>
    </location>
    <ligand>
        <name>ATP</name>
        <dbReference type="ChEBI" id="CHEBI:30616"/>
    </ligand>
</feature>
<feature type="splice variant" id="VSP_024167" description="In isoform 2." evidence="5">
    <original>VGRTARI</original>
    <variation>YLKHLPV</variation>
    <location>
        <begin position="428"/>
        <end position="434"/>
    </location>
</feature>
<feature type="splice variant" id="VSP_024168" description="In isoform 2." evidence="5">
    <location>
        <begin position="435"/>
        <end position="591"/>
    </location>
</feature>
<feature type="sequence conflict" description="In Ref. 6; AK066175." evidence="7" ref="6">
    <original>Q</original>
    <variation>R</variation>
    <location>
        <position position="360"/>
    </location>
</feature>
<dbReference type="EC" id="3.6.4.13" evidence="7"/>
<dbReference type="EMBL" id="AC079022">
    <property type="protein sequence ID" value="AAK73153.1"/>
    <property type="status" value="ALT_SEQ"/>
    <property type="molecule type" value="Genomic_DNA"/>
</dbReference>
<dbReference type="EMBL" id="AC079356">
    <property type="protein sequence ID" value="AAU44200.1"/>
    <property type="molecule type" value="Genomic_DNA"/>
</dbReference>
<dbReference type="EMBL" id="AP008211">
    <property type="protein sequence ID" value="BAF16354.2"/>
    <property type="molecule type" value="Genomic_DNA"/>
</dbReference>
<dbReference type="EMBL" id="AP014961">
    <property type="protein sequence ID" value="BAS91914.1"/>
    <property type="molecule type" value="Genomic_DNA"/>
</dbReference>
<dbReference type="EMBL" id="AP014961">
    <property type="protein sequence ID" value="BAS91915.1"/>
    <property type="molecule type" value="Genomic_DNA"/>
</dbReference>
<dbReference type="EMBL" id="CM000142">
    <property type="protein sequence ID" value="EEE62071.1"/>
    <property type="molecule type" value="Genomic_DNA"/>
</dbReference>
<dbReference type="EMBL" id="AK060179">
    <property type="status" value="NOT_ANNOTATED_CDS"/>
    <property type="molecule type" value="mRNA"/>
</dbReference>
<dbReference type="EMBL" id="AK066175">
    <property type="status" value="NOT_ANNOTATED_CDS"/>
    <property type="molecule type" value="mRNA"/>
</dbReference>
<dbReference type="RefSeq" id="XP_015640476.1">
    <property type="nucleotide sequence ID" value="XM_015784990.1"/>
</dbReference>
<dbReference type="SMR" id="Q0DLB9"/>
<dbReference type="FunCoup" id="Q0DLB9">
    <property type="interactions" value="1675"/>
</dbReference>
<dbReference type="STRING" id="39947.Q0DLB9"/>
<dbReference type="PaxDb" id="39947-Q0DLB9"/>
<dbReference type="EnsemblPlants" id="Os05t0110500-02">
    <molecule id="Q0DLB9-1"/>
    <property type="protein sequence ID" value="Os05t0110500-02"/>
    <property type="gene ID" value="Os05g0110500"/>
</dbReference>
<dbReference type="Gramene" id="Os05t0110500-02">
    <molecule id="Q0DLB9-1"/>
    <property type="protein sequence ID" value="Os05t0110500-02"/>
    <property type="gene ID" value="Os05g0110500"/>
</dbReference>
<dbReference type="KEGG" id="dosa:Os05g0110500"/>
<dbReference type="eggNOG" id="KOG0348">
    <property type="taxonomic scope" value="Eukaryota"/>
</dbReference>
<dbReference type="InParanoid" id="Q0DLB9"/>
<dbReference type="OMA" id="AVHIKAD"/>
<dbReference type="OrthoDB" id="422663at2759"/>
<dbReference type="Proteomes" id="UP000000763">
    <property type="component" value="Chromosome 5"/>
</dbReference>
<dbReference type="Proteomes" id="UP000007752">
    <property type="component" value="Chromosome 5"/>
</dbReference>
<dbReference type="Proteomes" id="UP000059680">
    <property type="component" value="Chromosome 5"/>
</dbReference>
<dbReference type="ExpressionAtlas" id="Q0DLB9">
    <property type="expression patterns" value="baseline and differential"/>
</dbReference>
<dbReference type="GO" id="GO:0005634">
    <property type="term" value="C:nucleus"/>
    <property type="evidence" value="ECO:0000318"/>
    <property type="project" value="GO_Central"/>
</dbReference>
<dbReference type="GO" id="GO:0005524">
    <property type="term" value="F:ATP binding"/>
    <property type="evidence" value="ECO:0007669"/>
    <property type="project" value="UniProtKB-KW"/>
</dbReference>
<dbReference type="GO" id="GO:0016887">
    <property type="term" value="F:ATP hydrolysis activity"/>
    <property type="evidence" value="ECO:0007669"/>
    <property type="project" value="RHEA"/>
</dbReference>
<dbReference type="GO" id="GO:0003723">
    <property type="term" value="F:RNA binding"/>
    <property type="evidence" value="ECO:0007669"/>
    <property type="project" value="UniProtKB-KW"/>
</dbReference>
<dbReference type="GO" id="GO:0003724">
    <property type="term" value="F:RNA helicase activity"/>
    <property type="evidence" value="ECO:0007669"/>
    <property type="project" value="UniProtKB-EC"/>
</dbReference>
<dbReference type="GO" id="GO:0042254">
    <property type="term" value="P:ribosome biogenesis"/>
    <property type="evidence" value="ECO:0000318"/>
    <property type="project" value="GO_Central"/>
</dbReference>
<dbReference type="CDD" id="cd17949">
    <property type="entry name" value="DEADc_DDX31"/>
    <property type="match status" value="1"/>
</dbReference>
<dbReference type="CDD" id="cd18787">
    <property type="entry name" value="SF2_C_DEAD"/>
    <property type="match status" value="1"/>
</dbReference>
<dbReference type="Gene3D" id="3.40.50.300">
    <property type="entry name" value="P-loop containing nucleotide triphosphate hydrolases"/>
    <property type="match status" value="2"/>
</dbReference>
<dbReference type="InterPro" id="IPR011545">
    <property type="entry name" value="DEAD/DEAH_box_helicase_dom"/>
</dbReference>
<dbReference type="InterPro" id="IPR014001">
    <property type="entry name" value="Helicase_ATP-bd"/>
</dbReference>
<dbReference type="InterPro" id="IPR001650">
    <property type="entry name" value="Helicase_C-like"/>
</dbReference>
<dbReference type="InterPro" id="IPR027417">
    <property type="entry name" value="P-loop_NTPase"/>
</dbReference>
<dbReference type="InterPro" id="IPR014014">
    <property type="entry name" value="RNA_helicase_DEAD_Q_motif"/>
</dbReference>
<dbReference type="InterPro" id="IPR025313">
    <property type="entry name" value="SPB4-like_CTE"/>
</dbReference>
<dbReference type="PANTHER" id="PTHR24031">
    <property type="entry name" value="RNA HELICASE"/>
    <property type="match status" value="1"/>
</dbReference>
<dbReference type="Pfam" id="PF13959">
    <property type="entry name" value="CTE_SPB4"/>
    <property type="match status" value="1"/>
</dbReference>
<dbReference type="Pfam" id="PF00270">
    <property type="entry name" value="DEAD"/>
    <property type="match status" value="1"/>
</dbReference>
<dbReference type="Pfam" id="PF00271">
    <property type="entry name" value="Helicase_C"/>
    <property type="match status" value="1"/>
</dbReference>
<dbReference type="SMART" id="SM00487">
    <property type="entry name" value="DEXDc"/>
    <property type="match status" value="1"/>
</dbReference>
<dbReference type="SMART" id="SM01178">
    <property type="entry name" value="DUF4217"/>
    <property type="match status" value="1"/>
</dbReference>
<dbReference type="SMART" id="SM00490">
    <property type="entry name" value="HELICc"/>
    <property type="match status" value="1"/>
</dbReference>
<dbReference type="SUPFAM" id="SSF52540">
    <property type="entry name" value="P-loop containing nucleoside triphosphate hydrolases"/>
    <property type="match status" value="2"/>
</dbReference>
<dbReference type="PROSITE" id="PS51192">
    <property type="entry name" value="HELICASE_ATP_BIND_1"/>
    <property type="match status" value="1"/>
</dbReference>
<dbReference type="PROSITE" id="PS51194">
    <property type="entry name" value="HELICASE_CTER"/>
    <property type="match status" value="1"/>
</dbReference>
<dbReference type="PROSITE" id="PS51195">
    <property type="entry name" value="Q_MOTIF"/>
    <property type="match status" value="1"/>
</dbReference>
<proteinExistence type="evidence at transcript level"/>